<name>NSA2_HUMAN</name>
<evidence type="ECO:0000250" key="1"/>
<evidence type="ECO:0000255" key="2">
    <source>
        <dbReference type="PROSITE-ProRule" id="PRU00768"/>
    </source>
</evidence>
<evidence type="ECO:0000256" key="3">
    <source>
        <dbReference type="SAM" id="MobiDB-lite"/>
    </source>
</evidence>
<evidence type="ECO:0000269" key="4">
    <source>
    </source>
</evidence>
<evidence type="ECO:0000305" key="5"/>
<evidence type="ECO:0007744" key="6">
    <source>
    </source>
</evidence>
<evidence type="ECO:0007744" key="7">
    <source>
    </source>
</evidence>
<evidence type="ECO:0007744" key="8">
    <source>
    </source>
</evidence>
<accession>O95478</accession>
<proteinExistence type="evidence at protein level"/>
<comment type="function">
    <text evidence="1">Involved in the biogenesis of the 60S ribosomal subunit. May play a part in the quality control of pre-60S particles (By similarity).</text>
</comment>
<comment type="subunit">
    <text evidence="1">Component of the pre-66S ribosomal particle.</text>
</comment>
<comment type="subcellular location">
    <subcellularLocation>
        <location evidence="4">Nucleus</location>
        <location evidence="4">Nucleolus</location>
    </subcellularLocation>
</comment>
<comment type="similarity">
    <text evidence="5">Belongs to the eukaryotic ribosomal protein eS8 family. Ribosome biogenesis protein NSA2 subfamily.</text>
</comment>
<sequence>MPQNEYIELHRKRYGYRLDYHEKKRKKESREAHERSKKAKKMIGLKAKLYHKQRHAEKIQMKKTIKMHEKRNTKQKNDEKTPQGAVPAYLLDREGQSRAKVLSNMIKQKRKEKAGKWEVPLPKVRAQGETEVLKVIRTGKRKKKAWKRMVTKVCFVGDGFTRKPPKYERFIRPMGLRFKKAHVTHPELKATFCLPILGVKKNPSSPLYTTLGVITKGTVIEVNVSELGLVTQGGKVIWGKYAQVTNNPENDGCINAVLLV</sequence>
<organism>
    <name type="scientific">Homo sapiens</name>
    <name type="common">Human</name>
    <dbReference type="NCBI Taxonomy" id="9606"/>
    <lineage>
        <taxon>Eukaryota</taxon>
        <taxon>Metazoa</taxon>
        <taxon>Chordata</taxon>
        <taxon>Craniata</taxon>
        <taxon>Vertebrata</taxon>
        <taxon>Euteleostomi</taxon>
        <taxon>Mammalia</taxon>
        <taxon>Eutheria</taxon>
        <taxon>Euarchontoglires</taxon>
        <taxon>Primates</taxon>
        <taxon>Haplorrhini</taxon>
        <taxon>Catarrhini</taxon>
        <taxon>Hominidae</taxon>
        <taxon>Homo</taxon>
    </lineage>
</organism>
<protein>
    <recommendedName>
        <fullName>Ribosome biogenesis protein NSA2 homolog</fullName>
    </recommendedName>
    <alternativeName>
        <fullName>Hairy cell leukemia protein 1</fullName>
    </alternativeName>
    <alternativeName>
        <fullName>TGF-beta-inducible nuclear protein 1</fullName>
    </alternativeName>
</protein>
<keyword id="KW-0002">3D-structure</keyword>
<keyword id="KW-1017">Isopeptide bond</keyword>
<keyword id="KW-0539">Nucleus</keyword>
<keyword id="KW-0597">Phosphoprotein</keyword>
<keyword id="KW-1267">Proteomics identification</keyword>
<keyword id="KW-1185">Reference proteome</keyword>
<keyword id="KW-0687">Ribonucleoprotein</keyword>
<keyword id="KW-0690">Ribosome biogenesis</keyword>
<keyword id="KW-0698">rRNA processing</keyword>
<keyword id="KW-0832">Ubl conjugation</keyword>
<gene>
    <name type="primary">NSA2</name>
    <name type="synonym">TINP1</name>
    <name type="ORF">HUSSY-29</name>
</gene>
<dbReference type="EMBL" id="AF372458">
    <property type="protein sequence ID" value="AAK53761.1"/>
    <property type="molecule type" value="mRNA"/>
</dbReference>
<dbReference type="EMBL" id="AJ012409">
    <property type="protein sequence ID" value="CAA10008.1"/>
    <property type="molecule type" value="mRNA"/>
</dbReference>
<dbReference type="EMBL" id="AF077615">
    <property type="protein sequence ID" value="AAG43048.1"/>
    <property type="molecule type" value="mRNA"/>
</dbReference>
<dbReference type="EMBL" id="BC005288">
    <property type="protein sequence ID" value="AAH05288.1"/>
    <property type="molecule type" value="mRNA"/>
</dbReference>
<dbReference type="CCDS" id="CCDS4025.1"/>
<dbReference type="RefSeq" id="NP_001258594.1">
    <property type="nucleotide sequence ID" value="NM_001271665.1"/>
</dbReference>
<dbReference type="RefSeq" id="NP_055701.1">
    <property type="nucleotide sequence ID" value="NM_014886.6"/>
</dbReference>
<dbReference type="PDB" id="8FKR">
    <property type="method" value="EM"/>
    <property type="resolution" value="2.89 A"/>
    <property type="chains" value="NF=1-260"/>
</dbReference>
<dbReference type="PDB" id="8FKS">
    <property type="method" value="EM"/>
    <property type="resolution" value="2.88 A"/>
    <property type="chains" value="NF=1-260"/>
</dbReference>
<dbReference type="PDB" id="8FKT">
    <property type="method" value="EM"/>
    <property type="resolution" value="2.81 A"/>
    <property type="chains" value="NF=1-260"/>
</dbReference>
<dbReference type="PDB" id="8FKU">
    <property type="method" value="EM"/>
    <property type="resolution" value="2.82 A"/>
    <property type="chains" value="NF=1-260"/>
</dbReference>
<dbReference type="PDB" id="8FKV">
    <property type="method" value="EM"/>
    <property type="resolution" value="2.47 A"/>
    <property type="chains" value="NF=1-260"/>
</dbReference>
<dbReference type="PDB" id="8FKW">
    <property type="method" value="EM"/>
    <property type="resolution" value="2.50 A"/>
    <property type="chains" value="NF=1-260"/>
</dbReference>
<dbReference type="PDB" id="8FKX">
    <property type="method" value="EM"/>
    <property type="resolution" value="2.59 A"/>
    <property type="chains" value="NF=1-260"/>
</dbReference>
<dbReference type="PDB" id="8FKY">
    <property type="method" value="EM"/>
    <property type="resolution" value="2.67 A"/>
    <property type="chains" value="NF=1-260"/>
</dbReference>
<dbReference type="PDB" id="8FKZ">
    <property type="method" value="EM"/>
    <property type="resolution" value="3.04 A"/>
    <property type="chains" value="NF=1-260"/>
</dbReference>
<dbReference type="PDB" id="8FL0">
    <property type="method" value="EM"/>
    <property type="resolution" value="2.91 A"/>
    <property type="chains" value="NF=1-260"/>
</dbReference>
<dbReference type="PDB" id="8FL2">
    <property type="method" value="EM"/>
    <property type="resolution" value="2.67 A"/>
    <property type="chains" value="NF=1-260"/>
</dbReference>
<dbReference type="PDB" id="8FL3">
    <property type="method" value="EM"/>
    <property type="resolution" value="2.53 A"/>
    <property type="chains" value="NF=1-260"/>
</dbReference>
<dbReference type="PDB" id="8FL4">
    <property type="method" value="EM"/>
    <property type="resolution" value="2.89 A"/>
    <property type="chains" value="NF=1-260"/>
</dbReference>
<dbReference type="PDB" id="8FL6">
    <property type="method" value="EM"/>
    <property type="resolution" value="2.62 A"/>
    <property type="chains" value="NF=1-260"/>
</dbReference>
<dbReference type="PDB" id="8FL7">
    <property type="method" value="EM"/>
    <property type="resolution" value="2.55 A"/>
    <property type="chains" value="NF=1-260"/>
</dbReference>
<dbReference type="PDB" id="8FL9">
    <property type="method" value="EM"/>
    <property type="resolution" value="2.75 A"/>
    <property type="chains" value="NF=1-260"/>
</dbReference>
<dbReference type="PDB" id="8IDY">
    <property type="method" value="EM"/>
    <property type="resolution" value="3.00 A"/>
    <property type="chains" value="v=1-260"/>
</dbReference>
<dbReference type="PDB" id="8IE3">
    <property type="method" value="EM"/>
    <property type="resolution" value="3.30 A"/>
    <property type="chains" value="R=1-260"/>
</dbReference>
<dbReference type="PDB" id="8INE">
    <property type="method" value="EM"/>
    <property type="resolution" value="3.20 A"/>
    <property type="chains" value="s=1-260"/>
</dbReference>
<dbReference type="PDB" id="8INF">
    <property type="method" value="EM"/>
    <property type="resolution" value="3.00 A"/>
    <property type="chains" value="s=1-260"/>
</dbReference>
<dbReference type="PDB" id="8INK">
    <property type="method" value="EM"/>
    <property type="resolution" value="3.20 A"/>
    <property type="chains" value="J=1-260"/>
</dbReference>
<dbReference type="PDB" id="8IPD">
    <property type="method" value="EM"/>
    <property type="resolution" value="3.20 A"/>
    <property type="chains" value="J=1-260"/>
</dbReference>
<dbReference type="PDB" id="8IPX">
    <property type="method" value="EM"/>
    <property type="resolution" value="4.30 A"/>
    <property type="chains" value="J=1-260"/>
</dbReference>
<dbReference type="PDB" id="8IPY">
    <property type="method" value="EM"/>
    <property type="resolution" value="3.20 A"/>
    <property type="chains" value="J=1-260"/>
</dbReference>
<dbReference type="PDB" id="8IR1">
    <property type="method" value="EM"/>
    <property type="resolution" value="3.30 A"/>
    <property type="chains" value="J=1-260"/>
</dbReference>
<dbReference type="PDB" id="8IR3">
    <property type="method" value="EM"/>
    <property type="resolution" value="3.50 A"/>
    <property type="chains" value="J=1-260"/>
</dbReference>
<dbReference type="PDB" id="8RL2">
    <property type="method" value="EM"/>
    <property type="resolution" value="2.84 A"/>
    <property type="chains" value="CH=1-260"/>
</dbReference>
<dbReference type="PDBsum" id="8FKR"/>
<dbReference type="PDBsum" id="8FKS"/>
<dbReference type="PDBsum" id="8FKT"/>
<dbReference type="PDBsum" id="8FKU"/>
<dbReference type="PDBsum" id="8FKV"/>
<dbReference type="PDBsum" id="8FKW"/>
<dbReference type="PDBsum" id="8FKX"/>
<dbReference type="PDBsum" id="8FKY"/>
<dbReference type="PDBsum" id="8FKZ"/>
<dbReference type="PDBsum" id="8FL0"/>
<dbReference type="PDBsum" id="8FL2"/>
<dbReference type="PDBsum" id="8FL3"/>
<dbReference type="PDBsum" id="8FL4"/>
<dbReference type="PDBsum" id="8FL6"/>
<dbReference type="PDBsum" id="8FL7"/>
<dbReference type="PDBsum" id="8FL9"/>
<dbReference type="PDBsum" id="8IDY"/>
<dbReference type="PDBsum" id="8IE3"/>
<dbReference type="PDBsum" id="8INE"/>
<dbReference type="PDBsum" id="8INF"/>
<dbReference type="PDBsum" id="8INK"/>
<dbReference type="PDBsum" id="8IPD"/>
<dbReference type="PDBsum" id="8IPX"/>
<dbReference type="PDBsum" id="8IPY"/>
<dbReference type="PDBsum" id="8IR1"/>
<dbReference type="PDBsum" id="8IR3"/>
<dbReference type="PDBsum" id="8RL2"/>
<dbReference type="EMDB" id="EMD-19330"/>
<dbReference type="EMDB" id="EMD-29254"/>
<dbReference type="EMDB" id="EMD-29255"/>
<dbReference type="EMDB" id="EMD-29256"/>
<dbReference type="EMDB" id="EMD-29257"/>
<dbReference type="EMDB" id="EMD-29258"/>
<dbReference type="EMDB" id="EMD-29259"/>
<dbReference type="EMDB" id="EMD-29260"/>
<dbReference type="EMDB" id="EMD-29261"/>
<dbReference type="EMDB" id="EMD-29262"/>
<dbReference type="EMDB" id="EMD-29263"/>
<dbReference type="EMDB" id="EMD-29265"/>
<dbReference type="EMDB" id="EMD-29266"/>
<dbReference type="EMDB" id="EMD-29267"/>
<dbReference type="EMDB" id="EMD-29268"/>
<dbReference type="EMDB" id="EMD-29269"/>
<dbReference type="EMDB" id="EMD-29271"/>
<dbReference type="EMDB" id="EMD-35371"/>
<dbReference type="EMDB" id="EMD-35375"/>
<dbReference type="EMDB" id="EMD-35596"/>
<dbReference type="EMDB" id="EMD-35597"/>
<dbReference type="EMDB" id="EMD-35599"/>
<dbReference type="EMDB" id="EMD-35639"/>
<dbReference type="EMDB" id="EMD-35649"/>
<dbReference type="EMDB" id="EMD-35651"/>
<dbReference type="EMDB" id="EMD-35672"/>
<dbReference type="EMDB" id="EMD-35673"/>
<dbReference type="SMR" id="O95478"/>
<dbReference type="BioGRID" id="115683">
    <property type="interactions" value="246"/>
</dbReference>
<dbReference type="FunCoup" id="O95478">
    <property type="interactions" value="1054"/>
</dbReference>
<dbReference type="IntAct" id="O95478">
    <property type="interactions" value="159"/>
</dbReference>
<dbReference type="MINT" id="O95478"/>
<dbReference type="STRING" id="9606.ENSP00000483484"/>
<dbReference type="GlyGen" id="O95478">
    <property type="glycosylation" value="2 sites, 1 N-linked glycan (1 site), 1 O-linked glycan (1 site)"/>
</dbReference>
<dbReference type="iPTMnet" id="O95478"/>
<dbReference type="PhosphoSitePlus" id="O95478"/>
<dbReference type="SwissPalm" id="O95478"/>
<dbReference type="BioMuta" id="NSA2"/>
<dbReference type="jPOST" id="O95478"/>
<dbReference type="MassIVE" id="O95478"/>
<dbReference type="PaxDb" id="9606-ENSP00000483484"/>
<dbReference type="PeptideAtlas" id="O95478"/>
<dbReference type="ProteomicsDB" id="50909"/>
<dbReference type="Pumba" id="O95478"/>
<dbReference type="Antibodypedia" id="12347">
    <property type="antibodies" value="81 antibodies from 28 providers"/>
</dbReference>
<dbReference type="DNASU" id="10412"/>
<dbReference type="Ensembl" id="ENST00000610426.5">
    <property type="protein sequence ID" value="ENSP00000483484.1"/>
    <property type="gene ID" value="ENSG00000164346.10"/>
</dbReference>
<dbReference type="GeneID" id="10412"/>
<dbReference type="KEGG" id="hsa:10412"/>
<dbReference type="MANE-Select" id="ENST00000610426.5">
    <property type="protein sequence ID" value="ENSP00000483484.1"/>
    <property type="RefSeq nucleotide sequence ID" value="NM_014886.6"/>
    <property type="RefSeq protein sequence ID" value="NP_055701.1"/>
</dbReference>
<dbReference type="AGR" id="HGNC:30728"/>
<dbReference type="CTD" id="10412"/>
<dbReference type="GeneCards" id="NSA2"/>
<dbReference type="HGNC" id="HGNC:30728">
    <property type="gene designation" value="NSA2"/>
</dbReference>
<dbReference type="HPA" id="ENSG00000164346">
    <property type="expression patterns" value="Low tissue specificity"/>
</dbReference>
<dbReference type="MIM" id="612497">
    <property type="type" value="gene"/>
</dbReference>
<dbReference type="neXtProt" id="NX_O95478"/>
<dbReference type="OpenTargets" id="ENSG00000164346"/>
<dbReference type="PharmGKB" id="PA165660390"/>
<dbReference type="VEuPathDB" id="HostDB:ENSG00000164346"/>
<dbReference type="eggNOG" id="KOG3163">
    <property type="taxonomic scope" value="Eukaryota"/>
</dbReference>
<dbReference type="GeneTree" id="ENSGT00390000018706"/>
<dbReference type="HOGENOM" id="CLU_1070048_0_0_1"/>
<dbReference type="InParanoid" id="O95478"/>
<dbReference type="OMA" id="TNTPEND"/>
<dbReference type="OrthoDB" id="1847590at2759"/>
<dbReference type="PAN-GO" id="O95478">
    <property type="GO annotations" value="3 GO annotations based on evolutionary models"/>
</dbReference>
<dbReference type="PhylomeDB" id="O95478"/>
<dbReference type="TreeFam" id="TF300766"/>
<dbReference type="PathwayCommons" id="O95478"/>
<dbReference type="SignaLink" id="O95478"/>
<dbReference type="BioGRID-ORCS" id="10412">
    <property type="hits" value="767 hits in 1083 CRISPR screens"/>
</dbReference>
<dbReference type="CD-CODE" id="91857CE7">
    <property type="entry name" value="Nucleolus"/>
</dbReference>
<dbReference type="ChiTaRS" id="NSA2">
    <property type="organism name" value="human"/>
</dbReference>
<dbReference type="GeneWiki" id="TINP1"/>
<dbReference type="GenomeRNAi" id="10412"/>
<dbReference type="Pharos" id="O95478">
    <property type="development level" value="Tbio"/>
</dbReference>
<dbReference type="PRO" id="PR:O95478"/>
<dbReference type="Proteomes" id="UP000005640">
    <property type="component" value="Chromosome 5"/>
</dbReference>
<dbReference type="RNAct" id="O95478">
    <property type="molecule type" value="protein"/>
</dbReference>
<dbReference type="Bgee" id="ENSG00000164346">
    <property type="expression patterns" value="Expressed in calcaneal tendon and 217 other cell types or tissues"/>
</dbReference>
<dbReference type="ExpressionAtlas" id="O95478">
    <property type="expression patterns" value="baseline and differential"/>
</dbReference>
<dbReference type="GO" id="GO:0005730">
    <property type="term" value="C:nucleolus"/>
    <property type="evidence" value="ECO:0007669"/>
    <property type="project" value="UniProtKB-SubCell"/>
</dbReference>
<dbReference type="GO" id="GO:0030687">
    <property type="term" value="C:preribosome, large subunit precursor"/>
    <property type="evidence" value="ECO:0000318"/>
    <property type="project" value="GO_Central"/>
</dbReference>
<dbReference type="GO" id="GO:0003723">
    <property type="term" value="F:RNA binding"/>
    <property type="evidence" value="ECO:0007005"/>
    <property type="project" value="UniProtKB"/>
</dbReference>
<dbReference type="GO" id="GO:0000460">
    <property type="term" value="P:maturation of 5.8S rRNA"/>
    <property type="evidence" value="ECO:0000318"/>
    <property type="project" value="GO_Central"/>
</dbReference>
<dbReference type="GO" id="GO:0000470">
    <property type="term" value="P:maturation of LSU-rRNA"/>
    <property type="evidence" value="ECO:0000318"/>
    <property type="project" value="GO_Central"/>
</dbReference>
<dbReference type="CDD" id="cd11381">
    <property type="entry name" value="NSA2"/>
    <property type="match status" value="1"/>
</dbReference>
<dbReference type="FunFam" id="2.40.10.310:FF:000001">
    <property type="entry name" value="NSA2, ribosome biogenesis homolog"/>
    <property type="match status" value="1"/>
</dbReference>
<dbReference type="Gene3D" id="2.40.10.310">
    <property type="match status" value="1"/>
</dbReference>
<dbReference type="InterPro" id="IPR039411">
    <property type="entry name" value="NSA2_fam"/>
</dbReference>
<dbReference type="InterPro" id="IPR022309">
    <property type="entry name" value="Ribosomal_Se8/biogenesis_NSA2"/>
</dbReference>
<dbReference type="PANTHER" id="PTHR12642">
    <property type="entry name" value="RIBOSOME BIOGENESIS PROTEIN NSA2 HOMOLOG"/>
    <property type="match status" value="1"/>
</dbReference>
<dbReference type="Pfam" id="PF01201">
    <property type="entry name" value="Ribosomal_S8e"/>
    <property type="match status" value="1"/>
</dbReference>
<feature type="chain" id="PRO_0000122259" description="Ribosome biogenesis protein NSA2 homolog">
    <location>
        <begin position="1"/>
        <end position="260"/>
    </location>
</feature>
<feature type="region of interest" description="Disordered" evidence="3">
    <location>
        <begin position="20"/>
        <end position="41"/>
    </location>
</feature>
<feature type="short sequence motif" description="Nuclear localization signal" evidence="2">
    <location>
        <begin position="11"/>
        <end position="18"/>
    </location>
</feature>
<feature type="compositionally biased region" description="Basic and acidic residues" evidence="3">
    <location>
        <begin position="20"/>
        <end position="34"/>
    </location>
</feature>
<feature type="modified residue" description="Phosphothreonine" evidence="6 7">
    <location>
        <position position="81"/>
    </location>
</feature>
<feature type="cross-link" description="Glycyl lysine isopeptide (Lys-Gly) (interchain with G-Cter in SUMO2)" evidence="8">
    <location>
        <position position="80"/>
    </location>
</feature>
<feature type="sequence variant" id="VAR_051862" description="In dbSNP:rs3733793.">
    <original>R</original>
    <variation>C</variation>
    <location>
        <position position="11"/>
    </location>
</feature>
<reference key="1">
    <citation type="journal article" date="1999" name="Genomics">
        <title>Molecular analysis of the human chromosome 5q13.3 region in patients with hairy cell leukemia and identification of tumor suppressor gene candidates.</title>
        <authorList>
            <person name="Wu X."/>
            <person name="Ivanova G."/>
            <person name="Merup M."/>
            <person name="Jansson M."/>
            <person name="Stellan B."/>
            <person name="Grander D."/>
            <person name="Zabarovsky E."/>
            <person name="Gahrton G."/>
            <person name="Einhorn S."/>
        </authorList>
    </citation>
    <scope>NUCLEOTIDE SEQUENCE [MRNA]</scope>
</reference>
<reference key="2">
    <citation type="journal article" date="2001" name="Yeast">
        <title>Characterization of 16 novel human genes showing high similarity to yeast sequences.</title>
        <authorList>
            <person name="Stanchi F."/>
            <person name="Bertocco E."/>
            <person name="Toppo S."/>
            <person name="Dioguardi R."/>
            <person name="Simionati B."/>
            <person name="Cannata N."/>
            <person name="Zimbello R."/>
            <person name="Lanfranchi G."/>
            <person name="Valle G."/>
        </authorList>
    </citation>
    <scope>NUCLEOTIDE SEQUENCE [MRNA]</scope>
    <source>
        <tissue>Skeletal muscle</tissue>
    </source>
</reference>
<reference key="3">
    <citation type="submission" date="1998-07" db="EMBL/GenBank/DDBJ databases">
        <title>TGF beta induced nuclear protein.</title>
        <authorList>
            <person name="Zhang J.S."/>
            <person name="Smith D.I."/>
        </authorList>
    </citation>
    <scope>NUCLEOTIDE SEQUENCE [MRNA]</scope>
</reference>
<reference key="4">
    <citation type="journal article" date="2004" name="Genome Res.">
        <title>The status, quality, and expansion of the NIH full-length cDNA project: the Mammalian Gene Collection (MGC).</title>
        <authorList>
            <consortium name="The MGC Project Team"/>
        </authorList>
    </citation>
    <scope>NUCLEOTIDE SEQUENCE [LARGE SCALE MRNA]</scope>
    <source>
        <tissue>Urinary bladder</tissue>
    </source>
</reference>
<reference key="5">
    <citation type="journal article" date="2002" name="Mol. Biol. Cell">
        <title>Functional proteomic analysis of human nucleolus.</title>
        <authorList>
            <person name="Scherl A."/>
            <person name="Coute Y."/>
            <person name="Deon C."/>
            <person name="Calle A."/>
            <person name="Kindbeiter K."/>
            <person name="Sanchez J.-C."/>
            <person name="Greco A."/>
            <person name="Hochstrasser D.F."/>
            <person name="Diaz J.-J."/>
        </authorList>
    </citation>
    <scope>SUBCELLULAR LOCATION [LARGE SCALE ANALYSIS]</scope>
    <source>
        <tissue>Cervix carcinoma</tissue>
    </source>
</reference>
<reference key="6">
    <citation type="journal article" date="2008" name="Proc. Natl. Acad. Sci. U.S.A.">
        <title>A quantitative atlas of mitotic phosphorylation.</title>
        <authorList>
            <person name="Dephoure N."/>
            <person name="Zhou C."/>
            <person name="Villen J."/>
            <person name="Beausoleil S.A."/>
            <person name="Bakalarski C.E."/>
            <person name="Elledge S.J."/>
            <person name="Gygi S.P."/>
        </authorList>
    </citation>
    <scope>PHOSPHORYLATION [LARGE SCALE ANALYSIS] AT THR-81</scope>
    <scope>IDENTIFICATION BY MASS SPECTROMETRY [LARGE SCALE ANALYSIS]</scope>
    <source>
        <tissue>Cervix carcinoma</tissue>
    </source>
</reference>
<reference key="7">
    <citation type="journal article" date="2010" name="Sci. Signal.">
        <title>Quantitative phosphoproteomics reveals widespread full phosphorylation site occupancy during mitosis.</title>
        <authorList>
            <person name="Olsen J.V."/>
            <person name="Vermeulen M."/>
            <person name="Santamaria A."/>
            <person name="Kumar C."/>
            <person name="Miller M.L."/>
            <person name="Jensen L.J."/>
            <person name="Gnad F."/>
            <person name="Cox J."/>
            <person name="Jensen T.S."/>
            <person name="Nigg E.A."/>
            <person name="Brunak S."/>
            <person name="Mann M."/>
        </authorList>
    </citation>
    <scope>PHOSPHORYLATION [LARGE SCALE ANALYSIS] AT THR-81</scope>
    <scope>IDENTIFICATION BY MASS SPECTROMETRY [LARGE SCALE ANALYSIS]</scope>
    <source>
        <tissue>Cervix carcinoma</tissue>
    </source>
</reference>
<reference key="8">
    <citation type="journal article" date="2017" name="Nat. Struct. Mol. Biol.">
        <title>Site-specific mapping of the human SUMO proteome reveals co-modification with phosphorylation.</title>
        <authorList>
            <person name="Hendriks I.A."/>
            <person name="Lyon D."/>
            <person name="Young C."/>
            <person name="Jensen L.J."/>
            <person name="Vertegaal A.C."/>
            <person name="Nielsen M.L."/>
        </authorList>
    </citation>
    <scope>SUMOYLATION [LARGE SCALE ANALYSIS] AT LYS-80</scope>
    <scope>IDENTIFICATION BY MASS SPECTROMETRY [LARGE SCALE ANALYSIS]</scope>
</reference>